<dbReference type="EC" id="6.1.1.7" evidence="1"/>
<dbReference type="EMBL" id="CP000387">
    <property type="protein sequence ID" value="ABN44188.1"/>
    <property type="molecule type" value="Genomic_DNA"/>
</dbReference>
<dbReference type="RefSeq" id="WP_011836704.1">
    <property type="nucleotide sequence ID" value="NC_009009.1"/>
</dbReference>
<dbReference type="RefSeq" id="YP_001034738.1">
    <property type="nucleotide sequence ID" value="NC_009009.1"/>
</dbReference>
<dbReference type="SMR" id="A3CLY3"/>
<dbReference type="STRING" id="388919.SSA_0756"/>
<dbReference type="KEGG" id="ssa:SSA_0756"/>
<dbReference type="PATRIC" id="fig|388919.9.peg.723"/>
<dbReference type="eggNOG" id="COG0013">
    <property type="taxonomic scope" value="Bacteria"/>
</dbReference>
<dbReference type="HOGENOM" id="CLU_004485_1_1_9"/>
<dbReference type="OrthoDB" id="9803884at2"/>
<dbReference type="Proteomes" id="UP000002148">
    <property type="component" value="Chromosome"/>
</dbReference>
<dbReference type="GO" id="GO:0005829">
    <property type="term" value="C:cytosol"/>
    <property type="evidence" value="ECO:0007669"/>
    <property type="project" value="TreeGrafter"/>
</dbReference>
<dbReference type="GO" id="GO:0004813">
    <property type="term" value="F:alanine-tRNA ligase activity"/>
    <property type="evidence" value="ECO:0007669"/>
    <property type="project" value="UniProtKB-UniRule"/>
</dbReference>
<dbReference type="GO" id="GO:0002161">
    <property type="term" value="F:aminoacyl-tRNA deacylase activity"/>
    <property type="evidence" value="ECO:0007669"/>
    <property type="project" value="TreeGrafter"/>
</dbReference>
<dbReference type="GO" id="GO:0005524">
    <property type="term" value="F:ATP binding"/>
    <property type="evidence" value="ECO:0007669"/>
    <property type="project" value="UniProtKB-UniRule"/>
</dbReference>
<dbReference type="GO" id="GO:0140096">
    <property type="term" value="F:catalytic activity, acting on a protein"/>
    <property type="evidence" value="ECO:0007669"/>
    <property type="project" value="UniProtKB-ARBA"/>
</dbReference>
<dbReference type="GO" id="GO:0016740">
    <property type="term" value="F:transferase activity"/>
    <property type="evidence" value="ECO:0007669"/>
    <property type="project" value="UniProtKB-ARBA"/>
</dbReference>
<dbReference type="GO" id="GO:0000049">
    <property type="term" value="F:tRNA binding"/>
    <property type="evidence" value="ECO:0007669"/>
    <property type="project" value="UniProtKB-KW"/>
</dbReference>
<dbReference type="GO" id="GO:0008270">
    <property type="term" value="F:zinc ion binding"/>
    <property type="evidence" value="ECO:0007669"/>
    <property type="project" value="UniProtKB-UniRule"/>
</dbReference>
<dbReference type="GO" id="GO:0006419">
    <property type="term" value="P:alanyl-tRNA aminoacylation"/>
    <property type="evidence" value="ECO:0007669"/>
    <property type="project" value="UniProtKB-UniRule"/>
</dbReference>
<dbReference type="CDD" id="cd00673">
    <property type="entry name" value="AlaRS_core"/>
    <property type="match status" value="1"/>
</dbReference>
<dbReference type="FunFam" id="3.10.310.40:FF:000001">
    <property type="entry name" value="Alanine--tRNA ligase"/>
    <property type="match status" value="1"/>
</dbReference>
<dbReference type="FunFam" id="3.30.54.20:FF:000001">
    <property type="entry name" value="Alanine--tRNA ligase"/>
    <property type="match status" value="1"/>
</dbReference>
<dbReference type="FunFam" id="3.30.930.10:FF:000046">
    <property type="entry name" value="Alanine--tRNA ligase"/>
    <property type="match status" value="1"/>
</dbReference>
<dbReference type="FunFam" id="3.30.980.10:FF:000004">
    <property type="entry name" value="Alanine--tRNA ligase, cytoplasmic"/>
    <property type="match status" value="1"/>
</dbReference>
<dbReference type="Gene3D" id="2.40.30.130">
    <property type="match status" value="1"/>
</dbReference>
<dbReference type="Gene3D" id="3.10.310.40">
    <property type="match status" value="1"/>
</dbReference>
<dbReference type="Gene3D" id="3.30.54.20">
    <property type="match status" value="1"/>
</dbReference>
<dbReference type="Gene3D" id="6.10.250.550">
    <property type="match status" value="1"/>
</dbReference>
<dbReference type="Gene3D" id="3.30.930.10">
    <property type="entry name" value="Bira Bifunctional Protein, Domain 2"/>
    <property type="match status" value="1"/>
</dbReference>
<dbReference type="Gene3D" id="3.30.980.10">
    <property type="entry name" value="Threonyl-trna Synthetase, Chain A, domain 2"/>
    <property type="match status" value="1"/>
</dbReference>
<dbReference type="HAMAP" id="MF_00036_B">
    <property type="entry name" value="Ala_tRNA_synth_B"/>
    <property type="match status" value="1"/>
</dbReference>
<dbReference type="InterPro" id="IPR045864">
    <property type="entry name" value="aa-tRNA-synth_II/BPL/LPL"/>
</dbReference>
<dbReference type="InterPro" id="IPR002318">
    <property type="entry name" value="Ala-tRNA-lgiase_IIc"/>
</dbReference>
<dbReference type="InterPro" id="IPR018162">
    <property type="entry name" value="Ala-tRNA-ligase_IIc_anticod-bd"/>
</dbReference>
<dbReference type="InterPro" id="IPR018165">
    <property type="entry name" value="Ala-tRNA-synth_IIc_core"/>
</dbReference>
<dbReference type="InterPro" id="IPR018164">
    <property type="entry name" value="Ala-tRNA-synth_IIc_N"/>
</dbReference>
<dbReference type="InterPro" id="IPR050058">
    <property type="entry name" value="Ala-tRNA_ligase"/>
</dbReference>
<dbReference type="InterPro" id="IPR023033">
    <property type="entry name" value="Ala_tRNA_ligase_euk/bac"/>
</dbReference>
<dbReference type="InterPro" id="IPR003156">
    <property type="entry name" value="DHHA1_dom"/>
</dbReference>
<dbReference type="InterPro" id="IPR018163">
    <property type="entry name" value="Thr/Ala-tRNA-synth_IIc_edit"/>
</dbReference>
<dbReference type="InterPro" id="IPR009000">
    <property type="entry name" value="Transl_B-barrel_sf"/>
</dbReference>
<dbReference type="InterPro" id="IPR012947">
    <property type="entry name" value="tRNA_SAD"/>
</dbReference>
<dbReference type="NCBIfam" id="TIGR00344">
    <property type="entry name" value="alaS"/>
    <property type="match status" value="1"/>
</dbReference>
<dbReference type="PANTHER" id="PTHR11777:SF9">
    <property type="entry name" value="ALANINE--TRNA LIGASE, CYTOPLASMIC"/>
    <property type="match status" value="1"/>
</dbReference>
<dbReference type="PANTHER" id="PTHR11777">
    <property type="entry name" value="ALANYL-TRNA SYNTHETASE"/>
    <property type="match status" value="1"/>
</dbReference>
<dbReference type="Pfam" id="PF02272">
    <property type="entry name" value="DHHA1"/>
    <property type="match status" value="1"/>
</dbReference>
<dbReference type="Pfam" id="PF01411">
    <property type="entry name" value="tRNA-synt_2c"/>
    <property type="match status" value="1"/>
</dbReference>
<dbReference type="Pfam" id="PF07973">
    <property type="entry name" value="tRNA_SAD"/>
    <property type="match status" value="1"/>
</dbReference>
<dbReference type="PRINTS" id="PR00980">
    <property type="entry name" value="TRNASYNTHALA"/>
</dbReference>
<dbReference type="SMART" id="SM00863">
    <property type="entry name" value="tRNA_SAD"/>
    <property type="match status" value="1"/>
</dbReference>
<dbReference type="SUPFAM" id="SSF55681">
    <property type="entry name" value="Class II aaRS and biotin synthetases"/>
    <property type="match status" value="1"/>
</dbReference>
<dbReference type="SUPFAM" id="SSF101353">
    <property type="entry name" value="Putative anticodon-binding domain of alanyl-tRNA synthetase (AlaRS)"/>
    <property type="match status" value="1"/>
</dbReference>
<dbReference type="SUPFAM" id="SSF55186">
    <property type="entry name" value="ThrRS/AlaRS common domain"/>
    <property type="match status" value="1"/>
</dbReference>
<dbReference type="SUPFAM" id="SSF50447">
    <property type="entry name" value="Translation proteins"/>
    <property type="match status" value="1"/>
</dbReference>
<dbReference type="PROSITE" id="PS50860">
    <property type="entry name" value="AA_TRNA_LIGASE_II_ALA"/>
    <property type="match status" value="1"/>
</dbReference>
<reference key="1">
    <citation type="journal article" date="2007" name="J. Bacteriol.">
        <title>Genome of the opportunistic pathogen Streptococcus sanguinis.</title>
        <authorList>
            <person name="Xu P."/>
            <person name="Alves J.M."/>
            <person name="Kitten T."/>
            <person name="Brown A."/>
            <person name="Chen Z."/>
            <person name="Ozaki L.S."/>
            <person name="Manque P."/>
            <person name="Ge X."/>
            <person name="Serrano M.G."/>
            <person name="Puiu D."/>
            <person name="Hendricks S."/>
            <person name="Wang Y."/>
            <person name="Chaplin M.D."/>
            <person name="Akan D."/>
            <person name="Paik S."/>
            <person name="Peterson D.L."/>
            <person name="Macrina F.L."/>
            <person name="Buck G.A."/>
        </authorList>
    </citation>
    <scope>NUCLEOTIDE SEQUENCE [LARGE SCALE GENOMIC DNA]</scope>
    <source>
        <strain>SK36</strain>
    </source>
</reference>
<gene>
    <name evidence="1" type="primary">alaS</name>
    <name type="ordered locus">SSA_0756</name>
</gene>
<keyword id="KW-0030">Aminoacyl-tRNA synthetase</keyword>
<keyword id="KW-0067">ATP-binding</keyword>
<keyword id="KW-0963">Cytoplasm</keyword>
<keyword id="KW-0436">Ligase</keyword>
<keyword id="KW-0479">Metal-binding</keyword>
<keyword id="KW-0547">Nucleotide-binding</keyword>
<keyword id="KW-0648">Protein biosynthesis</keyword>
<keyword id="KW-1185">Reference proteome</keyword>
<keyword id="KW-0694">RNA-binding</keyword>
<keyword id="KW-0820">tRNA-binding</keyword>
<keyword id="KW-0862">Zinc</keyword>
<accession>A3CLY3</accession>
<feature type="chain" id="PRO_0000347827" description="Alanine--tRNA ligase">
    <location>
        <begin position="1"/>
        <end position="872"/>
    </location>
</feature>
<feature type="binding site" evidence="1">
    <location>
        <position position="567"/>
    </location>
    <ligand>
        <name>Zn(2+)</name>
        <dbReference type="ChEBI" id="CHEBI:29105"/>
    </ligand>
</feature>
<feature type="binding site" evidence="1">
    <location>
        <position position="571"/>
    </location>
    <ligand>
        <name>Zn(2+)</name>
        <dbReference type="ChEBI" id="CHEBI:29105"/>
    </ligand>
</feature>
<feature type="binding site" evidence="1">
    <location>
        <position position="669"/>
    </location>
    <ligand>
        <name>Zn(2+)</name>
        <dbReference type="ChEBI" id="CHEBI:29105"/>
    </ligand>
</feature>
<feature type="binding site" evidence="1">
    <location>
        <position position="673"/>
    </location>
    <ligand>
        <name>Zn(2+)</name>
        <dbReference type="ChEBI" id="CHEBI:29105"/>
    </ligand>
</feature>
<proteinExistence type="inferred from homology"/>
<name>SYA_STRSV</name>
<sequence length="872" mass="96391">MKQMSSAQVRQMWLDFWATKGHAVEPSVSLVPVNDPTLLWINSGVATLKKYFDGTIIPENPRITNAQKAIRTNDIENVGKTARHHTMFEMLGNFSIGDYFRDEAIEWAYELLTSPEWFDFPKDKLYMTYYPDDKDSYNRWIAMGVEPSHLIPIEDNFWEIGAGPSGPDTEIFFDRGEAFDPENIGVRLLEEDIENDRYIEIWNIVLSQFNADPAVPRSEYKELPHKNIDTGAGLERLVAVIQGAKTNFETDLFMPIIREVEKLSGKVYDQDGDNMSFKVIADHIRSLSFAIGDGALPGNEGRGYVLRRLLRRASMHGQKLGINEPFLYKLVPTVGKIMESYYPEVLEKQEFIEKIIKSEEESFARTLHSGQHFAETIVADLKAKGQTVISGQDAFKLYDTYGFPLELTEEIAEEADMTVDRAGFEAAMKEQQDRARASVVKGGSMGMQNETLQAITVESAFNYEKEELTAELLAIVADDAAVESVETGTAALIFAETPFYAEMGGQVADHGQIFDGAGNLVAQVTDVQKAPNGQPLHTVEVLAPLALGQSYKLEIDHSRRHRVMKNHTATHLLHAALHNVLGNHATQAGSLNEVEFLRFDFTHFQAVTAEELRAIEQEVNEKIWEALAIETVETDIDTAKEMGAMALFGEKYGKEVRVVTIGDYSVELCGGTHVGNTSEIGIFKIVKEEGIGSGTRRILAVTSKEAFEAYREEEEALKAIAATLKAPQIKEVPHKVEALQEQLRQLQKENAELKEKAAAAASGEVFKDVQEANGHSFIASQVSVSDAGALRTFADTWKQKDYSDVLVLVAAIGDKVNVLAASKTKDVHAGNLIKELAPIVDGRGGGKPDMAMAGGSKQSAIPDLLAAVAEKL</sequence>
<evidence type="ECO:0000255" key="1">
    <source>
        <dbReference type="HAMAP-Rule" id="MF_00036"/>
    </source>
</evidence>
<organism>
    <name type="scientific">Streptococcus sanguinis (strain SK36)</name>
    <dbReference type="NCBI Taxonomy" id="388919"/>
    <lineage>
        <taxon>Bacteria</taxon>
        <taxon>Bacillati</taxon>
        <taxon>Bacillota</taxon>
        <taxon>Bacilli</taxon>
        <taxon>Lactobacillales</taxon>
        <taxon>Streptococcaceae</taxon>
        <taxon>Streptococcus</taxon>
    </lineage>
</organism>
<comment type="function">
    <text evidence="1">Catalyzes the attachment of alanine to tRNA(Ala) in a two-step reaction: alanine is first activated by ATP to form Ala-AMP and then transferred to the acceptor end of tRNA(Ala). Also edits incorrectly charged Ser-tRNA(Ala) and Gly-tRNA(Ala) via its editing domain.</text>
</comment>
<comment type="catalytic activity">
    <reaction evidence="1">
        <text>tRNA(Ala) + L-alanine + ATP = L-alanyl-tRNA(Ala) + AMP + diphosphate</text>
        <dbReference type="Rhea" id="RHEA:12540"/>
        <dbReference type="Rhea" id="RHEA-COMP:9657"/>
        <dbReference type="Rhea" id="RHEA-COMP:9923"/>
        <dbReference type="ChEBI" id="CHEBI:30616"/>
        <dbReference type="ChEBI" id="CHEBI:33019"/>
        <dbReference type="ChEBI" id="CHEBI:57972"/>
        <dbReference type="ChEBI" id="CHEBI:78442"/>
        <dbReference type="ChEBI" id="CHEBI:78497"/>
        <dbReference type="ChEBI" id="CHEBI:456215"/>
        <dbReference type="EC" id="6.1.1.7"/>
    </reaction>
</comment>
<comment type="cofactor">
    <cofactor evidence="1">
        <name>Zn(2+)</name>
        <dbReference type="ChEBI" id="CHEBI:29105"/>
    </cofactor>
    <text evidence="1">Binds 1 zinc ion per subunit.</text>
</comment>
<comment type="subcellular location">
    <subcellularLocation>
        <location evidence="1">Cytoplasm</location>
    </subcellularLocation>
</comment>
<comment type="domain">
    <text evidence="1">Consists of three domains; the N-terminal catalytic domain, the editing domain and the C-terminal C-Ala domain. The editing domain removes incorrectly charged amino acids, while the C-Ala domain, along with tRNA(Ala), serves as a bridge to cooperatively bring together the editing and aminoacylation centers thus stimulating deacylation of misacylated tRNAs.</text>
</comment>
<comment type="similarity">
    <text evidence="1">Belongs to the class-II aminoacyl-tRNA synthetase family.</text>
</comment>
<protein>
    <recommendedName>
        <fullName evidence="1">Alanine--tRNA ligase</fullName>
        <ecNumber evidence="1">6.1.1.7</ecNumber>
    </recommendedName>
    <alternativeName>
        <fullName evidence="1">Alanyl-tRNA synthetase</fullName>
        <shortName evidence="1">AlaRS</shortName>
    </alternativeName>
</protein>